<feature type="chain" id="PRO_0000304756" description="Mediator of RNA polymerase II transcription subunit 18">
    <location>
        <begin position="1"/>
        <end position="273"/>
    </location>
</feature>
<feature type="region of interest" description="Disordered" evidence="2">
    <location>
        <begin position="90"/>
        <end position="114"/>
    </location>
</feature>
<feature type="compositionally biased region" description="Low complexity" evidence="2">
    <location>
        <begin position="90"/>
        <end position="106"/>
    </location>
</feature>
<dbReference type="EMBL" id="BA000050">
    <property type="protein sequence ID" value="BAE57297.1"/>
    <property type="molecule type" value="Genomic_DNA"/>
</dbReference>
<dbReference type="RefSeq" id="XP_001819299.1">
    <property type="nucleotide sequence ID" value="XM_001819247.2"/>
</dbReference>
<dbReference type="STRING" id="510516.Q2UMB8"/>
<dbReference type="EnsemblFungi" id="BAE57297">
    <property type="protein sequence ID" value="BAE57297"/>
    <property type="gene ID" value="AO090003000061"/>
</dbReference>
<dbReference type="GeneID" id="5991282"/>
<dbReference type="KEGG" id="aor:AO090003000061"/>
<dbReference type="VEuPathDB" id="FungiDB:AO090003000061"/>
<dbReference type="HOGENOM" id="CLU_084516_0_0_1"/>
<dbReference type="OMA" id="PVHQHHE"/>
<dbReference type="OrthoDB" id="42470at5052"/>
<dbReference type="Proteomes" id="UP000006564">
    <property type="component" value="Chromosome 2"/>
</dbReference>
<dbReference type="GO" id="GO:0070847">
    <property type="term" value="C:core mediator complex"/>
    <property type="evidence" value="ECO:0007669"/>
    <property type="project" value="TreeGrafter"/>
</dbReference>
<dbReference type="GO" id="GO:0016592">
    <property type="term" value="C:mediator complex"/>
    <property type="evidence" value="ECO:0007669"/>
    <property type="project" value="InterPro"/>
</dbReference>
<dbReference type="GO" id="GO:0003712">
    <property type="term" value="F:transcription coregulator activity"/>
    <property type="evidence" value="ECO:0007669"/>
    <property type="project" value="InterPro"/>
</dbReference>
<dbReference type="GO" id="GO:0006357">
    <property type="term" value="P:regulation of transcription by RNA polymerase II"/>
    <property type="evidence" value="ECO:0007669"/>
    <property type="project" value="InterPro"/>
</dbReference>
<dbReference type="GO" id="GO:0006369">
    <property type="term" value="P:termination of RNA polymerase II transcription"/>
    <property type="evidence" value="ECO:0007669"/>
    <property type="project" value="TreeGrafter"/>
</dbReference>
<dbReference type="FunFam" id="2.40.320.10:FF:000007">
    <property type="entry name" value="Mediator of RNA polymerase II transcription subunit 18"/>
    <property type="match status" value="1"/>
</dbReference>
<dbReference type="Gene3D" id="2.40.320.10">
    <property type="entry name" value="Hypothetical Protein Pfu-838710-001"/>
    <property type="match status" value="1"/>
</dbReference>
<dbReference type="InterPro" id="IPR019095">
    <property type="entry name" value="Mediator_Med18"/>
</dbReference>
<dbReference type="PANTHER" id="PTHR13321:SF2">
    <property type="entry name" value="MEDIATOR OF RNA POLYMERASE II TRANSCRIPTION SUBUNIT 18"/>
    <property type="match status" value="1"/>
</dbReference>
<dbReference type="PANTHER" id="PTHR13321">
    <property type="entry name" value="MEDIATOR OF RNA POLYMERASE II TRANSCRIPTION, SUBUNIT 18"/>
    <property type="match status" value="1"/>
</dbReference>
<dbReference type="Pfam" id="PF09637">
    <property type="entry name" value="Med18"/>
    <property type="match status" value="1"/>
</dbReference>
<proteinExistence type="inferred from homology"/>
<name>MED18_ASPOR</name>
<comment type="function">
    <text evidence="1">Component of the Mediator complex, a coactivator involved in the regulated transcription of nearly all RNA polymerase II-dependent genes. Mediator functions as a bridge to convey information from gene-specific regulatory proteins to the basal RNA polymerase II transcription machinery. Mediator is recruited to promoters by direct interactions with regulatory proteins and serves as a scaffold for the assembly of a functional preinitiation complex with RNA polymerase II and the general transcription factors (By similarity).</text>
</comment>
<comment type="subunit">
    <text evidence="1">Component of the Mediator complex.</text>
</comment>
<comment type="subcellular location">
    <subcellularLocation>
        <location evidence="1">Nucleus</location>
    </subcellularLocation>
</comment>
<comment type="similarity">
    <text evidence="3">Belongs to the Mediator complex subunit 18 family.</text>
</comment>
<accession>Q2UMB8</accession>
<protein>
    <recommendedName>
        <fullName>Mediator of RNA polymerase II transcription subunit 18</fullName>
    </recommendedName>
    <alternativeName>
        <fullName>Mediator complex subunit 18</fullName>
    </alternativeName>
</protein>
<keyword id="KW-0010">Activator</keyword>
<keyword id="KW-0539">Nucleus</keyword>
<keyword id="KW-1185">Reference proteome</keyword>
<keyword id="KW-0804">Transcription</keyword>
<keyword id="KW-0805">Transcription regulation</keyword>
<reference key="1">
    <citation type="journal article" date="2005" name="Nature">
        <title>Genome sequencing and analysis of Aspergillus oryzae.</title>
        <authorList>
            <person name="Machida M."/>
            <person name="Asai K."/>
            <person name="Sano M."/>
            <person name="Tanaka T."/>
            <person name="Kumagai T."/>
            <person name="Terai G."/>
            <person name="Kusumoto K."/>
            <person name="Arima T."/>
            <person name="Akita O."/>
            <person name="Kashiwagi Y."/>
            <person name="Abe K."/>
            <person name="Gomi K."/>
            <person name="Horiuchi H."/>
            <person name="Kitamoto K."/>
            <person name="Kobayashi T."/>
            <person name="Takeuchi M."/>
            <person name="Denning D.W."/>
            <person name="Galagan J.E."/>
            <person name="Nierman W.C."/>
            <person name="Yu J."/>
            <person name="Archer D.B."/>
            <person name="Bennett J.W."/>
            <person name="Bhatnagar D."/>
            <person name="Cleveland T.E."/>
            <person name="Fedorova N.D."/>
            <person name="Gotoh O."/>
            <person name="Horikawa H."/>
            <person name="Hosoyama A."/>
            <person name="Ichinomiya M."/>
            <person name="Igarashi R."/>
            <person name="Iwashita K."/>
            <person name="Juvvadi P.R."/>
            <person name="Kato M."/>
            <person name="Kato Y."/>
            <person name="Kin T."/>
            <person name="Kokubun A."/>
            <person name="Maeda H."/>
            <person name="Maeyama N."/>
            <person name="Maruyama J."/>
            <person name="Nagasaki H."/>
            <person name="Nakajima T."/>
            <person name="Oda K."/>
            <person name="Okada K."/>
            <person name="Paulsen I."/>
            <person name="Sakamoto K."/>
            <person name="Sawano T."/>
            <person name="Takahashi M."/>
            <person name="Takase K."/>
            <person name="Terabayashi Y."/>
            <person name="Wortman J.R."/>
            <person name="Yamada O."/>
            <person name="Yamagata Y."/>
            <person name="Anazawa H."/>
            <person name="Hata Y."/>
            <person name="Koide Y."/>
            <person name="Komori T."/>
            <person name="Koyama Y."/>
            <person name="Minetoki T."/>
            <person name="Suharnan S."/>
            <person name="Tanaka A."/>
            <person name="Isono K."/>
            <person name="Kuhara S."/>
            <person name="Ogasawara N."/>
            <person name="Kikuchi H."/>
        </authorList>
    </citation>
    <scope>NUCLEOTIDE SEQUENCE [LARGE SCALE GENOMIC DNA]</scope>
    <source>
        <strain>ATCC 42149 / RIB 40</strain>
    </source>
</reference>
<evidence type="ECO:0000250" key="1"/>
<evidence type="ECO:0000256" key="2">
    <source>
        <dbReference type="SAM" id="MobiDB-lite"/>
    </source>
</evidence>
<evidence type="ECO:0000305" key="3"/>
<organism>
    <name type="scientific">Aspergillus oryzae (strain ATCC 42149 / RIB 40)</name>
    <name type="common">Yellow koji mold</name>
    <dbReference type="NCBI Taxonomy" id="510516"/>
    <lineage>
        <taxon>Eukaryota</taxon>
        <taxon>Fungi</taxon>
        <taxon>Dikarya</taxon>
        <taxon>Ascomycota</taxon>
        <taxon>Pezizomycotina</taxon>
        <taxon>Eurotiomycetes</taxon>
        <taxon>Eurotiomycetidae</taxon>
        <taxon>Eurotiales</taxon>
        <taxon>Aspergillaceae</taxon>
        <taxon>Aspergillus</taxon>
        <taxon>Aspergillus subgen. Circumdati</taxon>
    </lineage>
</organism>
<sequence length="273" mass="30477">MHELLLFASVPAHQHHELLQQLAGLTAMQPRHRLERRLIFKAYRKPGLINTRVGASQDLQGNEMQRLNKMLNGGMFYTQVVGPVSEADFGAQSSAASSGDPDAPMSGTDTGTNFEYHPYSYENQPWKLEFRDIPEAGTRSAVTTRLMASASLPKGDITTPMNAWGYSFVTEYVVEGDVFILNDIVIYLHRVLHYPAESSGSHEPRRQLPPFQQMSPLEKTGSYVLQASIAVQDGGNQEMMKTASQHLFGLREQLKSAVRLEQADRLSLDTRAK</sequence>
<gene>
    <name type="primary">srb5</name>
    <name type="synonym">med18</name>
    <name type="ORF">AO090003000061</name>
</gene>